<name>HLDD_POLNA</name>
<protein>
    <recommendedName>
        <fullName evidence="1">ADP-L-glycero-D-manno-heptose-6-epimerase</fullName>
        <ecNumber evidence="1">5.1.3.20</ecNumber>
    </recommendedName>
    <alternativeName>
        <fullName evidence="1">ADP-L-glycero-beta-D-manno-heptose-6-epimerase</fullName>
        <shortName evidence="1">ADP-glyceromanno-heptose 6-epimerase</shortName>
        <shortName evidence="1">ADP-hep 6-epimerase</shortName>
        <shortName evidence="1">AGME</shortName>
    </alternativeName>
</protein>
<feature type="chain" id="PRO_1000069362" description="ADP-L-glycero-D-manno-heptose-6-epimerase">
    <location>
        <begin position="1"/>
        <end position="335"/>
    </location>
</feature>
<feature type="active site" description="Proton acceptor" evidence="1">
    <location>
        <position position="139"/>
    </location>
</feature>
<feature type="active site" description="Proton acceptor" evidence="1">
    <location>
        <position position="181"/>
    </location>
</feature>
<feature type="binding site" evidence="1">
    <location>
        <begin position="11"/>
        <end position="12"/>
    </location>
    <ligand>
        <name>NADP(+)</name>
        <dbReference type="ChEBI" id="CHEBI:58349"/>
    </ligand>
</feature>
<feature type="binding site" evidence="1">
    <location>
        <begin position="32"/>
        <end position="33"/>
    </location>
    <ligand>
        <name>NADP(+)</name>
        <dbReference type="ChEBI" id="CHEBI:58349"/>
    </ligand>
</feature>
<feature type="binding site" evidence="1">
    <location>
        <position position="39"/>
    </location>
    <ligand>
        <name>NADP(+)</name>
        <dbReference type="ChEBI" id="CHEBI:58349"/>
    </ligand>
</feature>
<feature type="binding site" evidence="1">
    <location>
        <begin position="75"/>
        <end position="79"/>
    </location>
    <ligand>
        <name>NADP(+)</name>
        <dbReference type="ChEBI" id="CHEBI:58349"/>
    </ligand>
</feature>
<feature type="binding site" evidence="1">
    <location>
        <position position="92"/>
    </location>
    <ligand>
        <name>NADP(+)</name>
        <dbReference type="ChEBI" id="CHEBI:58349"/>
    </ligand>
</feature>
<feature type="binding site" evidence="1">
    <location>
        <position position="143"/>
    </location>
    <ligand>
        <name>NADP(+)</name>
        <dbReference type="ChEBI" id="CHEBI:58349"/>
    </ligand>
</feature>
<feature type="binding site" evidence="1">
    <location>
        <position position="172"/>
    </location>
    <ligand>
        <name>substrate</name>
    </ligand>
</feature>
<feature type="binding site" evidence="1">
    <location>
        <position position="173"/>
    </location>
    <ligand>
        <name>NADP(+)</name>
        <dbReference type="ChEBI" id="CHEBI:58349"/>
    </ligand>
</feature>
<feature type="binding site" evidence="1">
    <location>
        <position position="181"/>
    </location>
    <ligand>
        <name>NADP(+)</name>
        <dbReference type="ChEBI" id="CHEBI:58349"/>
    </ligand>
</feature>
<feature type="binding site" evidence="1">
    <location>
        <position position="183"/>
    </location>
    <ligand>
        <name>substrate</name>
    </ligand>
</feature>
<feature type="binding site" evidence="1">
    <location>
        <position position="190"/>
    </location>
    <ligand>
        <name>substrate</name>
    </ligand>
</feature>
<feature type="binding site" evidence="1">
    <location>
        <begin position="204"/>
        <end position="207"/>
    </location>
    <ligand>
        <name>substrate</name>
    </ligand>
</feature>
<feature type="binding site" evidence="1">
    <location>
        <position position="217"/>
    </location>
    <ligand>
        <name>substrate</name>
    </ligand>
</feature>
<feature type="binding site" evidence="1">
    <location>
        <position position="296"/>
    </location>
    <ligand>
        <name>substrate</name>
    </ligand>
</feature>
<accession>A1VR25</accession>
<proteinExistence type="inferred from homology"/>
<comment type="function">
    <text evidence="1">Catalyzes the interconversion between ADP-D-glycero-beta-D-manno-heptose and ADP-L-glycero-beta-D-manno-heptose via an epimerization at carbon 6 of the heptose.</text>
</comment>
<comment type="catalytic activity">
    <reaction evidence="1">
        <text>ADP-D-glycero-beta-D-manno-heptose = ADP-L-glycero-beta-D-manno-heptose</text>
        <dbReference type="Rhea" id="RHEA:17577"/>
        <dbReference type="ChEBI" id="CHEBI:59967"/>
        <dbReference type="ChEBI" id="CHEBI:61506"/>
        <dbReference type="EC" id="5.1.3.20"/>
    </reaction>
</comment>
<comment type="cofactor">
    <cofactor evidence="1">
        <name>NADP(+)</name>
        <dbReference type="ChEBI" id="CHEBI:58349"/>
    </cofactor>
    <text evidence="1">Binds 1 NADP(+) per subunit.</text>
</comment>
<comment type="pathway">
    <text evidence="1">Nucleotide-sugar biosynthesis; ADP-L-glycero-beta-D-manno-heptose biosynthesis; ADP-L-glycero-beta-D-manno-heptose from D-glycero-beta-D-manno-heptose 7-phosphate: step 4/4.</text>
</comment>
<comment type="subunit">
    <text evidence="1">Homopentamer.</text>
</comment>
<comment type="domain">
    <text evidence="1">Contains a large N-terminal NADP-binding domain, and a smaller C-terminal substrate-binding domain.</text>
</comment>
<comment type="similarity">
    <text evidence="1">Belongs to the NAD(P)-dependent epimerase/dehydratase family. HldD subfamily.</text>
</comment>
<dbReference type="EC" id="5.1.3.20" evidence="1"/>
<dbReference type="EMBL" id="CP000529">
    <property type="protein sequence ID" value="ABM38103.1"/>
    <property type="molecule type" value="Genomic_DNA"/>
</dbReference>
<dbReference type="RefSeq" id="WP_011802180.1">
    <property type="nucleotide sequence ID" value="NC_008781.1"/>
</dbReference>
<dbReference type="SMR" id="A1VR25"/>
<dbReference type="STRING" id="365044.Pnap_2801"/>
<dbReference type="KEGG" id="pna:Pnap_2801"/>
<dbReference type="eggNOG" id="COG0451">
    <property type="taxonomic scope" value="Bacteria"/>
</dbReference>
<dbReference type="HOGENOM" id="CLU_007383_1_3_4"/>
<dbReference type="OrthoDB" id="9803010at2"/>
<dbReference type="UniPathway" id="UPA00356">
    <property type="reaction ID" value="UER00440"/>
</dbReference>
<dbReference type="Proteomes" id="UP000000644">
    <property type="component" value="Chromosome"/>
</dbReference>
<dbReference type="GO" id="GO:0008712">
    <property type="term" value="F:ADP-glyceromanno-heptose 6-epimerase activity"/>
    <property type="evidence" value="ECO:0007669"/>
    <property type="project" value="UniProtKB-UniRule"/>
</dbReference>
<dbReference type="GO" id="GO:0050661">
    <property type="term" value="F:NADP binding"/>
    <property type="evidence" value="ECO:0007669"/>
    <property type="project" value="InterPro"/>
</dbReference>
<dbReference type="GO" id="GO:0097171">
    <property type="term" value="P:ADP-L-glycero-beta-D-manno-heptose biosynthetic process"/>
    <property type="evidence" value="ECO:0007669"/>
    <property type="project" value="UniProtKB-UniPathway"/>
</dbReference>
<dbReference type="GO" id="GO:0005975">
    <property type="term" value="P:carbohydrate metabolic process"/>
    <property type="evidence" value="ECO:0007669"/>
    <property type="project" value="UniProtKB-UniRule"/>
</dbReference>
<dbReference type="CDD" id="cd05248">
    <property type="entry name" value="ADP_GME_SDR_e"/>
    <property type="match status" value="1"/>
</dbReference>
<dbReference type="Gene3D" id="3.40.50.720">
    <property type="entry name" value="NAD(P)-binding Rossmann-like Domain"/>
    <property type="match status" value="1"/>
</dbReference>
<dbReference type="Gene3D" id="3.90.25.10">
    <property type="entry name" value="UDP-galactose 4-epimerase, domain 1"/>
    <property type="match status" value="1"/>
</dbReference>
<dbReference type="HAMAP" id="MF_01601">
    <property type="entry name" value="Heptose_epimerase"/>
    <property type="match status" value="1"/>
</dbReference>
<dbReference type="InterPro" id="IPR001509">
    <property type="entry name" value="Epimerase_deHydtase"/>
</dbReference>
<dbReference type="InterPro" id="IPR011912">
    <property type="entry name" value="Heptose_epim"/>
</dbReference>
<dbReference type="InterPro" id="IPR036291">
    <property type="entry name" value="NAD(P)-bd_dom_sf"/>
</dbReference>
<dbReference type="NCBIfam" id="TIGR02197">
    <property type="entry name" value="heptose_epim"/>
    <property type="match status" value="1"/>
</dbReference>
<dbReference type="PANTHER" id="PTHR43103:SF3">
    <property type="entry name" value="ADP-L-GLYCERO-D-MANNO-HEPTOSE-6-EPIMERASE"/>
    <property type="match status" value="1"/>
</dbReference>
<dbReference type="PANTHER" id="PTHR43103">
    <property type="entry name" value="NUCLEOSIDE-DIPHOSPHATE-SUGAR EPIMERASE"/>
    <property type="match status" value="1"/>
</dbReference>
<dbReference type="Pfam" id="PF01370">
    <property type="entry name" value="Epimerase"/>
    <property type="match status" value="1"/>
</dbReference>
<dbReference type="SUPFAM" id="SSF51735">
    <property type="entry name" value="NAD(P)-binding Rossmann-fold domains"/>
    <property type="match status" value="1"/>
</dbReference>
<keyword id="KW-0119">Carbohydrate metabolism</keyword>
<keyword id="KW-0413">Isomerase</keyword>
<keyword id="KW-0521">NADP</keyword>
<keyword id="KW-1185">Reference proteome</keyword>
<sequence>MKIVVTGAAGFIGSNLVKGLNARGIDDIIAVDDLTQGDKFRNLADLRIADYMDAGDFYDRFAEGAFGHVEAVFHEGACSDTMEPDGKYMMANNYTLSCNLFRACQNQNTRLLYASSAATYGGSDTFSESPEFEKPLNVYGYSKLLFDQHMRRELGMRFENAQTQVAGFRYFNVYGPREQHKGRMASVAFHQFNQFQADGKVKLFGDYGGYGPGGQMRDFVFIDDVVAVNLWFFDHPEKSGIFNLGTGRAQPFNDVAIAVVNTLRQSQNAAPLSLEDAVRGGMIDYVGFPEALVGKYQSYTQADLGALRAAGCQHVFADVQSGVTAYMQWLSNAKN</sequence>
<organism>
    <name type="scientific">Polaromonas naphthalenivorans (strain CJ2)</name>
    <dbReference type="NCBI Taxonomy" id="365044"/>
    <lineage>
        <taxon>Bacteria</taxon>
        <taxon>Pseudomonadati</taxon>
        <taxon>Pseudomonadota</taxon>
        <taxon>Betaproteobacteria</taxon>
        <taxon>Burkholderiales</taxon>
        <taxon>Comamonadaceae</taxon>
        <taxon>Polaromonas</taxon>
    </lineage>
</organism>
<reference key="1">
    <citation type="journal article" date="2009" name="Environ. Microbiol.">
        <title>The genome of Polaromonas naphthalenivorans strain CJ2, isolated from coal tar-contaminated sediment, reveals physiological and metabolic versatility and evolution through extensive horizontal gene transfer.</title>
        <authorList>
            <person name="Yagi J.M."/>
            <person name="Sims D."/>
            <person name="Brettin T."/>
            <person name="Bruce D."/>
            <person name="Madsen E.L."/>
        </authorList>
    </citation>
    <scope>NUCLEOTIDE SEQUENCE [LARGE SCALE GENOMIC DNA]</scope>
    <source>
        <strain>CJ2</strain>
    </source>
</reference>
<evidence type="ECO:0000255" key="1">
    <source>
        <dbReference type="HAMAP-Rule" id="MF_01601"/>
    </source>
</evidence>
<gene>
    <name evidence="1" type="primary">hldD</name>
    <name type="ordered locus">Pnap_2801</name>
</gene>